<name>INHBA_MOUSE</name>
<organism>
    <name type="scientific">Mus musculus</name>
    <name type="common">Mouse</name>
    <dbReference type="NCBI Taxonomy" id="10090"/>
    <lineage>
        <taxon>Eukaryota</taxon>
        <taxon>Metazoa</taxon>
        <taxon>Chordata</taxon>
        <taxon>Craniata</taxon>
        <taxon>Vertebrata</taxon>
        <taxon>Euteleostomi</taxon>
        <taxon>Mammalia</taxon>
        <taxon>Eutheria</taxon>
        <taxon>Euarchontoglires</taxon>
        <taxon>Glires</taxon>
        <taxon>Rodentia</taxon>
        <taxon>Myomorpha</taxon>
        <taxon>Muroidea</taxon>
        <taxon>Muridae</taxon>
        <taxon>Murinae</taxon>
        <taxon>Mus</taxon>
        <taxon>Mus</taxon>
    </lineage>
</organism>
<evidence type="ECO:0000250" key="1"/>
<evidence type="ECO:0000250" key="2">
    <source>
        <dbReference type="UniProtKB" id="P08476"/>
    </source>
</evidence>
<evidence type="ECO:0000255" key="3"/>
<evidence type="ECO:0000256" key="4">
    <source>
        <dbReference type="SAM" id="MobiDB-lite"/>
    </source>
</evidence>
<evidence type="ECO:0000269" key="5">
    <source>
    </source>
</evidence>
<evidence type="ECO:0000269" key="6">
    <source>
    </source>
</evidence>
<evidence type="ECO:0000305" key="7"/>
<gene>
    <name type="primary">Inhba</name>
</gene>
<dbReference type="EMBL" id="X69619">
    <property type="protein sequence ID" value="CAA49325.1"/>
    <property type="molecule type" value="mRNA"/>
</dbReference>
<dbReference type="EMBL" id="BC053527">
    <property type="protein sequence ID" value="AAH53527.1"/>
    <property type="molecule type" value="mRNA"/>
</dbReference>
<dbReference type="CCDS" id="CCDS26251.1"/>
<dbReference type="PIR" id="A60087">
    <property type="entry name" value="S31440"/>
</dbReference>
<dbReference type="RefSeq" id="NP_032406.1">
    <property type="nucleotide sequence ID" value="NM_008380.2"/>
</dbReference>
<dbReference type="RefSeq" id="XP_006516621.1">
    <property type="nucleotide sequence ID" value="XM_006516558.2"/>
</dbReference>
<dbReference type="RefSeq" id="XP_006516622.1">
    <property type="nucleotide sequence ID" value="XM_006516559.4"/>
</dbReference>
<dbReference type="RefSeq" id="XP_011242587.1">
    <property type="nucleotide sequence ID" value="XM_011244285.3"/>
</dbReference>
<dbReference type="RefSeq" id="XP_011242588.1">
    <property type="nucleotide sequence ID" value="XM_011244286.1"/>
</dbReference>
<dbReference type="SMR" id="Q04998"/>
<dbReference type="BioGRID" id="200762">
    <property type="interactions" value="5"/>
</dbReference>
<dbReference type="FunCoup" id="Q04998">
    <property type="interactions" value="401"/>
</dbReference>
<dbReference type="STRING" id="10090.ENSMUSP00000047894"/>
<dbReference type="BindingDB" id="Q04998"/>
<dbReference type="ChEMBL" id="CHEMBL3588734"/>
<dbReference type="GlyCosmos" id="Q04998">
    <property type="glycosylation" value="1 site, No reported glycans"/>
</dbReference>
<dbReference type="GlyGen" id="Q04998">
    <property type="glycosylation" value="2 sites"/>
</dbReference>
<dbReference type="PhosphoSitePlus" id="Q04998"/>
<dbReference type="PaxDb" id="10090-ENSMUSP00000047894"/>
<dbReference type="PeptideAtlas" id="Q04998"/>
<dbReference type="ProteomicsDB" id="301652"/>
<dbReference type="Antibodypedia" id="13122">
    <property type="antibodies" value="566 antibodies from 36 providers"/>
</dbReference>
<dbReference type="DNASU" id="16323"/>
<dbReference type="Ensembl" id="ENSMUST00000042603.14">
    <property type="protein sequence ID" value="ENSMUSP00000047894.7"/>
    <property type="gene ID" value="ENSMUSG00000041324.15"/>
</dbReference>
<dbReference type="Ensembl" id="ENSMUST00000164993.2">
    <property type="protein sequence ID" value="ENSMUSP00000132085.2"/>
    <property type="gene ID" value="ENSMUSG00000041324.15"/>
</dbReference>
<dbReference type="GeneID" id="16323"/>
<dbReference type="KEGG" id="mmu:16323"/>
<dbReference type="UCSC" id="uc007pnw.1">
    <property type="organism name" value="mouse"/>
</dbReference>
<dbReference type="AGR" id="MGI:96570"/>
<dbReference type="CTD" id="3624"/>
<dbReference type="MGI" id="MGI:96570">
    <property type="gene designation" value="Inhba"/>
</dbReference>
<dbReference type="VEuPathDB" id="HostDB:ENSMUSG00000041324"/>
<dbReference type="eggNOG" id="KOG3900">
    <property type="taxonomic scope" value="Eukaryota"/>
</dbReference>
<dbReference type="GeneTree" id="ENSGT00940000157116"/>
<dbReference type="HOGENOM" id="CLU_020515_5_1_1"/>
<dbReference type="InParanoid" id="Q04998"/>
<dbReference type="OMA" id="HACCKRQ"/>
<dbReference type="OrthoDB" id="6516235at2759"/>
<dbReference type="PhylomeDB" id="Q04998"/>
<dbReference type="TreeFam" id="TF351791"/>
<dbReference type="Reactome" id="R-MMU-1502540">
    <property type="pathway name" value="Signaling by Activin"/>
</dbReference>
<dbReference type="Reactome" id="R-MMU-201451">
    <property type="pathway name" value="Signaling by BMP"/>
</dbReference>
<dbReference type="Reactome" id="R-MMU-209822">
    <property type="pathway name" value="Glycoprotein hormones"/>
</dbReference>
<dbReference type="Reactome" id="R-MMU-2473224">
    <property type="pathway name" value="Antagonism of Activin by Follistatin"/>
</dbReference>
<dbReference type="Reactome" id="R-MMU-9839406">
    <property type="pathway name" value="TGFBR3 regulates activin signaling"/>
</dbReference>
<dbReference type="BioGRID-ORCS" id="16323">
    <property type="hits" value="5 hits in 80 CRISPR screens"/>
</dbReference>
<dbReference type="PRO" id="PR:Q04998"/>
<dbReference type="Proteomes" id="UP000000589">
    <property type="component" value="Chromosome 13"/>
</dbReference>
<dbReference type="RNAct" id="Q04998">
    <property type="molecule type" value="protein"/>
</dbReference>
<dbReference type="Bgee" id="ENSMUSG00000041324">
    <property type="expression patterns" value="Expressed in cumulus cell and 178 other cell types or tissues"/>
</dbReference>
<dbReference type="ExpressionAtlas" id="Q04998">
    <property type="expression patterns" value="baseline and differential"/>
</dbReference>
<dbReference type="GO" id="GO:0043509">
    <property type="term" value="C:activin A complex"/>
    <property type="evidence" value="ECO:0000250"/>
    <property type="project" value="UniProtKB"/>
</dbReference>
<dbReference type="GO" id="GO:0150005">
    <property type="term" value="C:enzyme activator complex"/>
    <property type="evidence" value="ECO:0007669"/>
    <property type="project" value="Ensembl"/>
</dbReference>
<dbReference type="GO" id="GO:0005576">
    <property type="term" value="C:extracellular region"/>
    <property type="evidence" value="ECO:0000250"/>
    <property type="project" value="UniProtKB"/>
</dbReference>
<dbReference type="GO" id="GO:0005615">
    <property type="term" value="C:extracellular space"/>
    <property type="evidence" value="ECO:0007005"/>
    <property type="project" value="BHF-UCL"/>
</dbReference>
<dbReference type="GO" id="GO:0043512">
    <property type="term" value="C:inhibin A complex"/>
    <property type="evidence" value="ECO:0000250"/>
    <property type="project" value="UniProtKB"/>
</dbReference>
<dbReference type="GO" id="GO:0048471">
    <property type="term" value="C:perinuclear region of cytoplasm"/>
    <property type="evidence" value="ECO:0000314"/>
    <property type="project" value="MGI"/>
</dbReference>
<dbReference type="GO" id="GO:0005125">
    <property type="term" value="F:cytokine activity"/>
    <property type="evidence" value="ECO:0000250"/>
    <property type="project" value="UniProtKB"/>
</dbReference>
<dbReference type="GO" id="GO:0008083">
    <property type="term" value="F:growth factor activity"/>
    <property type="evidence" value="ECO:0007669"/>
    <property type="project" value="UniProtKB-KW"/>
</dbReference>
<dbReference type="GO" id="GO:0005179">
    <property type="term" value="F:hormone activity"/>
    <property type="evidence" value="ECO:0007669"/>
    <property type="project" value="UniProtKB-KW"/>
</dbReference>
<dbReference type="GO" id="GO:0042802">
    <property type="term" value="F:identical protein binding"/>
    <property type="evidence" value="ECO:0007669"/>
    <property type="project" value="Ensembl"/>
</dbReference>
<dbReference type="GO" id="GO:0017046">
    <property type="term" value="F:peptide hormone binding"/>
    <property type="evidence" value="ECO:0007669"/>
    <property type="project" value="Ensembl"/>
</dbReference>
<dbReference type="GO" id="GO:0044877">
    <property type="term" value="F:protein-containing complex binding"/>
    <property type="evidence" value="ECO:0007669"/>
    <property type="project" value="Ensembl"/>
</dbReference>
<dbReference type="GO" id="GO:0005102">
    <property type="term" value="F:signaling receptor binding"/>
    <property type="evidence" value="ECO:0000353"/>
    <property type="project" value="MGI"/>
</dbReference>
<dbReference type="GO" id="GO:0070699">
    <property type="term" value="F:type II activin receptor binding"/>
    <property type="evidence" value="ECO:0007669"/>
    <property type="project" value="Ensembl"/>
</dbReference>
<dbReference type="GO" id="GO:0032924">
    <property type="term" value="P:activin receptor signaling pathway"/>
    <property type="evidence" value="ECO:0000250"/>
    <property type="project" value="UniProtKB"/>
</dbReference>
<dbReference type="GO" id="GO:0008209">
    <property type="term" value="P:androgen metabolic process"/>
    <property type="evidence" value="ECO:0000315"/>
    <property type="project" value="MGI"/>
</dbReference>
<dbReference type="GO" id="GO:1903449">
    <property type="term" value="P:androst-4-ene-3,17-dione biosynthetic process"/>
    <property type="evidence" value="ECO:0000315"/>
    <property type="project" value="MGI"/>
</dbReference>
<dbReference type="GO" id="GO:0006914">
    <property type="term" value="P:autophagy"/>
    <property type="evidence" value="ECO:0007669"/>
    <property type="project" value="Ensembl"/>
</dbReference>
<dbReference type="GO" id="GO:0060936">
    <property type="term" value="P:cardiac fibroblast cell development"/>
    <property type="evidence" value="ECO:0007669"/>
    <property type="project" value="Ensembl"/>
</dbReference>
<dbReference type="GO" id="GO:1904385">
    <property type="term" value="P:cellular response to angiotensin"/>
    <property type="evidence" value="ECO:0007669"/>
    <property type="project" value="Ensembl"/>
</dbReference>
<dbReference type="GO" id="GO:0071397">
    <property type="term" value="P:cellular response to cholesterol"/>
    <property type="evidence" value="ECO:0007669"/>
    <property type="project" value="Ensembl"/>
</dbReference>
<dbReference type="GO" id="GO:0071372">
    <property type="term" value="P:cellular response to follicle-stimulating hormone stimulus"/>
    <property type="evidence" value="ECO:0007669"/>
    <property type="project" value="Ensembl"/>
</dbReference>
<dbReference type="GO" id="GO:0071456">
    <property type="term" value="P:cellular response to hypoxia"/>
    <property type="evidence" value="ECO:0007669"/>
    <property type="project" value="Ensembl"/>
</dbReference>
<dbReference type="GO" id="GO:0090650">
    <property type="term" value="P:cellular response to oxygen-glucose deprivation"/>
    <property type="evidence" value="ECO:0007669"/>
    <property type="project" value="Ensembl"/>
</dbReference>
<dbReference type="GO" id="GO:0019221">
    <property type="term" value="P:cytokine-mediated signaling pathway"/>
    <property type="evidence" value="ECO:0007669"/>
    <property type="project" value="Ensembl"/>
</dbReference>
<dbReference type="GO" id="GO:0035987">
    <property type="term" value="P:endodermal cell differentiation"/>
    <property type="evidence" value="ECO:0007669"/>
    <property type="project" value="Ensembl"/>
</dbReference>
<dbReference type="GO" id="GO:0097191">
    <property type="term" value="P:extrinsic apoptotic signaling pathway"/>
    <property type="evidence" value="ECO:0007669"/>
    <property type="project" value="Ensembl"/>
</dbReference>
<dbReference type="GO" id="GO:0061029">
    <property type="term" value="P:eyelid development in camera-type eye"/>
    <property type="evidence" value="ECO:0000316"/>
    <property type="project" value="UniProtKB"/>
</dbReference>
<dbReference type="GO" id="GO:0010467">
    <property type="term" value="P:gene expression"/>
    <property type="evidence" value="ECO:0000315"/>
    <property type="project" value="MGI"/>
</dbReference>
<dbReference type="GO" id="GO:0001942">
    <property type="term" value="P:hair follicle development"/>
    <property type="evidence" value="ECO:0000250"/>
    <property type="project" value="UniProtKB"/>
</dbReference>
<dbReference type="GO" id="GO:0002244">
    <property type="term" value="P:hematopoietic progenitor cell differentiation"/>
    <property type="evidence" value="ECO:0000314"/>
    <property type="project" value="MGI"/>
</dbReference>
<dbReference type="GO" id="GO:0042541">
    <property type="term" value="P:hemoglobin biosynthetic process"/>
    <property type="evidence" value="ECO:0000250"/>
    <property type="project" value="UniProtKB"/>
</dbReference>
<dbReference type="GO" id="GO:0006629">
    <property type="term" value="P:lipid metabolic process"/>
    <property type="evidence" value="ECO:0000315"/>
    <property type="project" value="MGI"/>
</dbReference>
<dbReference type="GO" id="GO:0008584">
    <property type="term" value="P:male gonad development"/>
    <property type="evidence" value="ECO:0000315"/>
    <property type="project" value="MGI"/>
</dbReference>
<dbReference type="GO" id="GO:0001707">
    <property type="term" value="P:mesoderm formation"/>
    <property type="evidence" value="ECO:0000314"/>
    <property type="project" value="MGI"/>
</dbReference>
<dbReference type="GO" id="GO:0048333">
    <property type="term" value="P:mesodermal cell differentiation"/>
    <property type="evidence" value="ECO:0000314"/>
    <property type="project" value="MGI"/>
</dbReference>
<dbReference type="GO" id="GO:0030308">
    <property type="term" value="P:negative regulation of cell growth"/>
    <property type="evidence" value="ECO:0000250"/>
    <property type="project" value="UniProtKB"/>
</dbReference>
<dbReference type="GO" id="GO:0008285">
    <property type="term" value="P:negative regulation of cell population proliferation"/>
    <property type="evidence" value="ECO:0000250"/>
    <property type="project" value="UniProtKB"/>
</dbReference>
<dbReference type="GO" id="GO:2000134">
    <property type="term" value="P:negative regulation of G1/S transition of mitotic cell cycle"/>
    <property type="evidence" value="ECO:0000250"/>
    <property type="project" value="UniProtKB"/>
</dbReference>
<dbReference type="GO" id="GO:0051799">
    <property type="term" value="P:negative regulation of hair follicle development"/>
    <property type="evidence" value="ECO:0000266"/>
    <property type="project" value="MGI"/>
</dbReference>
<dbReference type="GO" id="GO:0042476">
    <property type="term" value="P:odontogenesis"/>
    <property type="evidence" value="ECO:0000250"/>
    <property type="project" value="UniProtKB"/>
</dbReference>
<dbReference type="GO" id="GO:0001541">
    <property type="term" value="P:ovarian follicle development"/>
    <property type="evidence" value="ECO:0000250"/>
    <property type="project" value="UniProtKB"/>
</dbReference>
<dbReference type="GO" id="GO:0032967">
    <property type="term" value="P:positive regulation of collagen biosynthetic process"/>
    <property type="evidence" value="ECO:0007669"/>
    <property type="project" value="Ensembl"/>
</dbReference>
<dbReference type="GO" id="GO:0045893">
    <property type="term" value="P:positive regulation of DNA-templated transcription"/>
    <property type="evidence" value="ECO:0000316"/>
    <property type="project" value="UniProtKB"/>
</dbReference>
<dbReference type="GO" id="GO:0070374">
    <property type="term" value="P:positive regulation of ERK1 and ERK2 cascade"/>
    <property type="evidence" value="ECO:0007669"/>
    <property type="project" value="Ensembl"/>
</dbReference>
<dbReference type="GO" id="GO:0045648">
    <property type="term" value="P:positive regulation of erythrocyte differentiation"/>
    <property type="evidence" value="ECO:0000250"/>
    <property type="project" value="UniProtKB"/>
</dbReference>
<dbReference type="GO" id="GO:2001241">
    <property type="term" value="P:positive regulation of extrinsic apoptotic signaling pathway in absence of ligand"/>
    <property type="evidence" value="ECO:0000250"/>
    <property type="project" value="UniProtKB"/>
</dbReference>
<dbReference type="GO" id="GO:0010628">
    <property type="term" value="P:positive regulation of gene expression"/>
    <property type="evidence" value="ECO:0007669"/>
    <property type="project" value="Ensembl"/>
</dbReference>
<dbReference type="GO" id="GO:0060279">
    <property type="term" value="P:positive regulation of ovulation"/>
    <property type="evidence" value="ECO:0000315"/>
    <property type="project" value="UniProtKB"/>
</dbReference>
<dbReference type="GO" id="GO:0051247">
    <property type="term" value="P:positive regulation of protein metabolic process"/>
    <property type="evidence" value="ECO:0007669"/>
    <property type="project" value="Ensembl"/>
</dbReference>
<dbReference type="GO" id="GO:0060391">
    <property type="term" value="P:positive regulation of SMAD protein signal transduction"/>
    <property type="evidence" value="ECO:0007669"/>
    <property type="project" value="Ensembl"/>
</dbReference>
<dbReference type="GO" id="GO:0045944">
    <property type="term" value="P:positive regulation of transcription by RNA polymerase II"/>
    <property type="evidence" value="ECO:0000314"/>
    <property type="project" value="MGI"/>
</dbReference>
<dbReference type="GO" id="GO:0045945">
    <property type="term" value="P:positive regulation of transcription by RNA polymerase III"/>
    <property type="evidence" value="ECO:0007669"/>
    <property type="project" value="Ensembl"/>
</dbReference>
<dbReference type="GO" id="GO:0042701">
    <property type="term" value="P:progesterone secretion"/>
    <property type="evidence" value="ECO:0000250"/>
    <property type="project" value="UniProtKB"/>
</dbReference>
<dbReference type="GO" id="GO:0046880">
    <property type="term" value="P:regulation of follicle-stimulating hormone secretion"/>
    <property type="evidence" value="ECO:0000250"/>
    <property type="project" value="UniProtKB"/>
</dbReference>
<dbReference type="GO" id="GO:0006357">
    <property type="term" value="P:regulation of transcription by RNA polymerase II"/>
    <property type="evidence" value="ECO:0000250"/>
    <property type="project" value="UniProtKB"/>
</dbReference>
<dbReference type="GO" id="GO:1904044">
    <property type="term" value="P:response to aldosterone"/>
    <property type="evidence" value="ECO:0007669"/>
    <property type="project" value="Ensembl"/>
</dbReference>
<dbReference type="GO" id="GO:0060021">
    <property type="term" value="P:roof of mouth development"/>
    <property type="evidence" value="ECO:0000250"/>
    <property type="project" value="UniProtKB"/>
</dbReference>
<dbReference type="GO" id="GO:0060008">
    <property type="term" value="P:Sertoli cell differentiation"/>
    <property type="evidence" value="ECO:0000315"/>
    <property type="project" value="MGI"/>
</dbReference>
<dbReference type="GO" id="GO:0060395">
    <property type="term" value="P:SMAD protein signal transduction"/>
    <property type="evidence" value="ECO:0007669"/>
    <property type="project" value="Ensembl"/>
</dbReference>
<dbReference type="GO" id="GO:0006694">
    <property type="term" value="P:steroid biosynthetic process"/>
    <property type="evidence" value="ECO:0000315"/>
    <property type="project" value="MGI"/>
</dbReference>
<dbReference type="GO" id="GO:0008202">
    <property type="term" value="P:steroid metabolic process"/>
    <property type="evidence" value="ECO:0000315"/>
    <property type="project" value="MGI"/>
</dbReference>
<dbReference type="GO" id="GO:0021773">
    <property type="term" value="P:striatal medium spiny neuron differentiation"/>
    <property type="evidence" value="ECO:0007669"/>
    <property type="project" value="Ensembl"/>
</dbReference>
<dbReference type="GO" id="GO:0061370">
    <property type="term" value="P:testosterone biosynthetic process"/>
    <property type="evidence" value="ECO:0000315"/>
    <property type="project" value="MGI"/>
</dbReference>
<dbReference type="GO" id="GO:0006366">
    <property type="term" value="P:transcription by RNA polymerase II"/>
    <property type="evidence" value="ECO:0000314"/>
    <property type="project" value="MGI"/>
</dbReference>
<dbReference type="CDD" id="cd19404">
    <property type="entry name" value="TGF_beta_INHBA"/>
    <property type="match status" value="1"/>
</dbReference>
<dbReference type="FunFam" id="2.10.90.10:FF:000005">
    <property type="entry name" value="Inhibin beta A chain"/>
    <property type="match status" value="1"/>
</dbReference>
<dbReference type="FunFam" id="2.60.120.970:FF:000007">
    <property type="entry name" value="Inhibin beta A chain"/>
    <property type="match status" value="1"/>
</dbReference>
<dbReference type="Gene3D" id="2.60.120.970">
    <property type="match status" value="1"/>
</dbReference>
<dbReference type="Gene3D" id="2.10.90.10">
    <property type="entry name" value="Cystine-knot cytokines"/>
    <property type="match status" value="1"/>
</dbReference>
<dbReference type="InterPro" id="IPR029034">
    <property type="entry name" value="Cystine-knot_cytokine"/>
</dbReference>
<dbReference type="InterPro" id="IPR000491">
    <property type="entry name" value="Inhibin_betaA"/>
</dbReference>
<dbReference type="InterPro" id="IPR001839">
    <property type="entry name" value="TGF-b_C"/>
</dbReference>
<dbReference type="InterPro" id="IPR001111">
    <property type="entry name" value="TGF-b_propeptide"/>
</dbReference>
<dbReference type="InterPro" id="IPR015615">
    <property type="entry name" value="TGF-beta-rel"/>
</dbReference>
<dbReference type="InterPro" id="IPR017948">
    <property type="entry name" value="TGFb_CS"/>
</dbReference>
<dbReference type="PANTHER" id="PTHR11848:SF133">
    <property type="entry name" value="INHIBIN BETA A CHAIN"/>
    <property type="match status" value="1"/>
</dbReference>
<dbReference type="PANTHER" id="PTHR11848">
    <property type="entry name" value="TGF-BETA FAMILY"/>
    <property type="match status" value="1"/>
</dbReference>
<dbReference type="Pfam" id="PF00019">
    <property type="entry name" value="TGF_beta"/>
    <property type="match status" value="1"/>
</dbReference>
<dbReference type="Pfam" id="PF00688">
    <property type="entry name" value="TGFb_propeptide"/>
    <property type="match status" value="1"/>
</dbReference>
<dbReference type="PRINTS" id="PR00670">
    <property type="entry name" value="INHIBINBA"/>
</dbReference>
<dbReference type="SMART" id="SM00204">
    <property type="entry name" value="TGFB"/>
    <property type="match status" value="1"/>
</dbReference>
<dbReference type="SUPFAM" id="SSF57501">
    <property type="entry name" value="Cystine-knot cytokines"/>
    <property type="match status" value="1"/>
</dbReference>
<dbReference type="PROSITE" id="PS00250">
    <property type="entry name" value="TGF_BETA_1"/>
    <property type="match status" value="1"/>
</dbReference>
<dbReference type="PROSITE" id="PS51362">
    <property type="entry name" value="TGF_BETA_2"/>
    <property type="match status" value="1"/>
</dbReference>
<feature type="signal peptide" evidence="1">
    <location>
        <begin position="1"/>
        <end position="20"/>
    </location>
</feature>
<feature type="propeptide" id="PRO_0000033710" evidence="5">
    <location>
        <begin position="21"/>
        <end position="308"/>
    </location>
</feature>
<feature type="chain" id="PRO_0000033711" description="Inhibin beta A chain">
    <location>
        <begin position="309"/>
        <end position="424"/>
    </location>
</feature>
<feature type="region of interest" description="Disordered" evidence="4">
    <location>
        <begin position="264"/>
        <end position="306"/>
    </location>
</feature>
<feature type="compositionally biased region" description="Basic and acidic residues" evidence="4">
    <location>
        <begin position="264"/>
        <end position="275"/>
    </location>
</feature>
<feature type="glycosylation site" description="N-linked (GlcNAc...) asparagine" evidence="3">
    <location>
        <position position="165"/>
    </location>
</feature>
<feature type="disulfide bond" evidence="1">
    <location>
        <begin position="312"/>
        <end position="320"/>
    </location>
</feature>
<feature type="disulfide bond" evidence="1">
    <location>
        <begin position="319"/>
        <end position="389"/>
    </location>
</feature>
<feature type="disulfide bond" evidence="1">
    <location>
        <begin position="348"/>
        <end position="421"/>
    </location>
</feature>
<feature type="disulfide bond" evidence="1">
    <location>
        <begin position="352"/>
        <end position="423"/>
    </location>
</feature>
<feature type="disulfide bond" description="Interchain" evidence="1">
    <location>
        <position position="388"/>
    </location>
</feature>
<protein>
    <recommendedName>
        <fullName>Inhibin beta A chain</fullName>
    </recommendedName>
    <alternativeName>
        <fullName>Activin beta-A chain</fullName>
    </alternativeName>
</protein>
<keyword id="KW-0165">Cleavage on pair of basic residues</keyword>
<keyword id="KW-0903">Direct protein sequencing</keyword>
<keyword id="KW-1015">Disulfide bond</keyword>
<keyword id="KW-0325">Glycoprotein</keyword>
<keyword id="KW-0339">Growth factor</keyword>
<keyword id="KW-0372">Hormone</keyword>
<keyword id="KW-1185">Reference proteome</keyword>
<keyword id="KW-0964">Secreted</keyword>
<keyword id="KW-0732">Signal</keyword>
<reference key="1">
    <citation type="journal article" date="1993" name="Development">
        <title>Activins are expressed in preimplantation mouse embryos and in ES and EC cells and are regulated on their differentiation.</title>
        <authorList>
            <person name="Albano P.M."/>
            <person name="Groome N."/>
            <person name="Smith J.C."/>
        </authorList>
    </citation>
    <scope>NUCLEOTIDE SEQUENCE [MRNA]</scope>
</reference>
<reference key="2">
    <citation type="journal article" date="2004" name="Genome Res.">
        <title>The status, quality, and expansion of the NIH full-length cDNA project: the Mammalian Gene Collection (MGC).</title>
        <authorList>
            <consortium name="The MGC Project Team"/>
        </authorList>
    </citation>
    <scope>NUCLEOTIDE SEQUENCE [LARGE SCALE MRNA]</scope>
    <source>
        <strain>FVB/N-3</strain>
        <tissue>Mammary tumor</tissue>
    </source>
</reference>
<reference key="3">
    <citation type="journal article" date="1990" name="Development">
        <title>A mesoderm-inducing factor produced by WEHI-3 murine myelomonocytic leukemia cells is activin A.</title>
        <authorList>
            <person name="Albano R.M."/>
            <person name="Godsave S.F."/>
            <person name="Huylebroeck D."/>
            <person name="Van Nimmen K."/>
            <person name="Isaacs H.V."/>
            <person name="Slack J.M."/>
            <person name="Smith J.C."/>
        </authorList>
    </citation>
    <scope>PROTEIN SEQUENCE OF 309-325</scope>
</reference>
<reference key="4">
    <citation type="journal article" date="1995" name="Nature">
        <title>Functional analysis of activins during mammalian development.</title>
        <authorList>
            <person name="Matzuk M.M."/>
            <person name="Kumar T.R."/>
            <person name="Vassalli A."/>
            <person name="Bickenbach J.R."/>
            <person name="Roop D.R."/>
            <person name="Jaenisch R."/>
            <person name="Bradley A."/>
        </authorList>
    </citation>
    <scope>FUNCTION</scope>
    <scope>DISRUPTION PHENOTYPE</scope>
</reference>
<sequence length="424" mass="47392">MPLLWLRGFLLASCWIIVRSSPTPGSEGHGSAPDCPSCALATLPKDGPNSQPEMVEAVKKHILNMLHLKKRPDVTQPVPKAALLNAIRKLHVGKVGENGYVEIEDDIGRRAEMNELMEQTSEIITFAESGTARKTLHFEISKEGSDLSVVERAEVWLFLKVPKANRTRTKVTIRLFQQQKHPQGSLDTGDEAEEMGLKGERSELLLSEKVVDARKSTWHIFPVSSSIQRLLDQGKSSLDVRIACEQCQESGASLVLLGKKKKKEVDGDGKKKDGSDGGLEEEKEQSHRPFLMLQARQSEDHPHRRRRRGLECDGKVNICCKKQFFVSFKDIGWNDWIIAPSGYHANYCEGECPSHIAGTSGSSLSFHSTVINHYRMRGHSPFANLKSCCVPTKLRPMSMLYYDDGQNIIKKDIQNMIVEECGCS</sequence>
<proteinExistence type="evidence at protein level"/>
<accession>Q04998</accession>
<comment type="function">
    <text evidence="2">Inhibins/activins are involved in regulating a number of diverse functions such as hypothalamic and pituitary hormone secretion, gonadal hormone secretion, germ cell development and maturation, erythroid differentiation, insulin secretion, nerve cell survival, embryonic axial development or bone growth, depending on their subunit composition.</text>
</comment>
<comment type="function">
    <text evidence="2">Activin A is a homodimer of INHBA that plays a role in several essential biological processes including embryonic development, stem cell maintenance and differentiation, haematopoiesis, cell proliferation and tissue fibrosis (PubMed:7885473). Signals through type I (such as ACVR1B or ACVR1C) and type II receptors (such as ACVR2A, ACVR2B or BMPR2) which, upon ligand binding, phosphorylate SMAD2 and SMAD3 intracellular signaling mediators that form a complex with SMAD4, translocate to the nucleus and modulate gene expression. Can also activate alternative non-canonical intracellular signaling pathways including the p38 MAPK, extracellular signal-regulated kinases 1/2 (ERK1/2) and c-Jun N-terminal kinases (JNKs) to modulate cell migration and differentiation. Alternatively, promotes osteoblastic differentiation via ACVRL1-SMAD1/5/9 pathway. In addition, can engage the type I receptor ACVR1 to form an ACVR1-activin A-type II receptor non-signaling complex (NSC) that renders receptors unavailable for engagement with BMPs, hence resulting in an apparent inhibition of ACVR1-mediated BMP signaling.</text>
</comment>
<comment type="function">
    <text evidence="2">Inhibin A is a dimer of alpha/INHA and beta-A/INHBA that functions as a feedback regulator in the hypothalamic-pituitary-gonadal (HPG) axis. Inhibits the secretion of FSH from the anterior pituitary gland by acting on pituitary gonadotrope cells. Antagonizes activin A by binding to the proteoglycan, betaglycan, and forming a stable complex with and, thereby, sequestering type II activin receptors while excluding type I receptor.</text>
</comment>
<comment type="subunit">
    <text evidence="2">Dimeric, linked by one or more disulfide bonds. Inhibin A is a dimer of alpha/INHA and beta-A/INHBA. Activin A is a homodimer of beta-A/INHBA. Activin AB is a dimer of beta-A/INHBA and beta-B/INHBB. Interacts with FST and FSTL3; these interactions prevent activin A interaction to its type II receptor. Activin A interacts with ACVR2A. Activin A interacts with BMPR2. Inhibin A interacts with ACVR1; this interaction creates a non-signaling complex (NSC) that inhibits ACVR1-mediated BMP signaling. Inhibin A interacts with ACVR2A.</text>
</comment>
<comment type="subcellular location">
    <subcellularLocation>
        <location evidence="2">Secreted</location>
    </subcellularLocation>
</comment>
<comment type="tissue specificity">
    <text>Uterus, ovary and liver.</text>
</comment>
<comment type="disruption phenotype">
    <text evidence="6">Activin A-deficient mice are born but die only within 24 h of birth because of craniofacial defects.</text>
</comment>
<comment type="similarity">
    <text evidence="7">Belongs to the TGF-beta family.</text>
</comment>